<reference key="1">
    <citation type="journal article" date="1990" name="J. Virol.">
        <title>Evolution of the nucleoprotein gene of influenza A virus.</title>
        <authorList>
            <person name="Gorman O.T."/>
            <person name="Bean W.J."/>
            <person name="Kawaoka Y."/>
            <person name="Webster R.G."/>
        </authorList>
    </citation>
    <scope>NUCLEOTIDE SEQUENCE [GENOMIC RNA]</scope>
</reference>
<reference key="2">
    <citation type="journal article" date="2006" name="Science">
        <title>Large-scale sequence analysis of avian influenza isolates.</title>
        <authorList>
            <person name="Obenauer J.C."/>
            <person name="Denson J."/>
            <person name="Mehta P.K."/>
            <person name="Su X."/>
            <person name="Mukatira S."/>
            <person name="Finkelstein D.B."/>
            <person name="Xu X."/>
            <person name="Wang J."/>
            <person name="Ma J."/>
            <person name="Fan Y."/>
            <person name="Rakestraw K.M."/>
            <person name="Webster R.G."/>
            <person name="Hoffmann E."/>
            <person name="Krauss S."/>
            <person name="Zheng J."/>
            <person name="Zhang Z."/>
            <person name="Naeve C.W."/>
        </authorList>
    </citation>
    <scope>NUCLEOTIDE SEQUENCE [GENOMIC RNA]</scope>
</reference>
<dbReference type="EMBL" id="M30769">
    <property type="protein sequence ID" value="AAA43471.1"/>
    <property type="molecule type" value="Genomic_RNA"/>
</dbReference>
<dbReference type="EMBL" id="CY005909">
    <property type="protein sequence ID" value="ABB21823.1"/>
    <property type="molecule type" value="Genomic_RNA"/>
</dbReference>
<dbReference type="SMR" id="P68882"/>
<dbReference type="PRO" id="PR:P68882"/>
<dbReference type="Proteomes" id="UP000008579">
    <property type="component" value="Genome"/>
</dbReference>
<dbReference type="GO" id="GO:0019029">
    <property type="term" value="C:helical viral capsid"/>
    <property type="evidence" value="ECO:0007669"/>
    <property type="project" value="UniProtKB-UniRule"/>
</dbReference>
<dbReference type="GO" id="GO:0043657">
    <property type="term" value="C:host cell"/>
    <property type="evidence" value="ECO:0007669"/>
    <property type="project" value="GOC"/>
</dbReference>
<dbReference type="GO" id="GO:0042025">
    <property type="term" value="C:host cell nucleus"/>
    <property type="evidence" value="ECO:0007669"/>
    <property type="project" value="UniProtKB-SubCell"/>
</dbReference>
<dbReference type="GO" id="GO:1990904">
    <property type="term" value="C:ribonucleoprotein complex"/>
    <property type="evidence" value="ECO:0007669"/>
    <property type="project" value="UniProtKB-KW"/>
</dbReference>
<dbReference type="GO" id="GO:0019013">
    <property type="term" value="C:viral nucleocapsid"/>
    <property type="evidence" value="ECO:0007669"/>
    <property type="project" value="UniProtKB-UniRule"/>
</dbReference>
<dbReference type="GO" id="GO:0003723">
    <property type="term" value="F:RNA binding"/>
    <property type="evidence" value="ECO:0007669"/>
    <property type="project" value="UniProtKB-UniRule"/>
</dbReference>
<dbReference type="GO" id="GO:0005198">
    <property type="term" value="F:structural molecule activity"/>
    <property type="evidence" value="ECO:0007669"/>
    <property type="project" value="UniProtKB-UniRule"/>
</dbReference>
<dbReference type="GO" id="GO:0046718">
    <property type="term" value="P:symbiont entry into host cell"/>
    <property type="evidence" value="ECO:0007669"/>
    <property type="project" value="UniProtKB-KW"/>
</dbReference>
<dbReference type="GO" id="GO:0075732">
    <property type="term" value="P:viral penetration into host nucleus"/>
    <property type="evidence" value="ECO:0007669"/>
    <property type="project" value="UniProtKB-UniRule"/>
</dbReference>
<dbReference type="HAMAP" id="MF_04070">
    <property type="entry name" value="INFV_NCAP"/>
    <property type="match status" value="1"/>
</dbReference>
<dbReference type="InterPro" id="IPR002141">
    <property type="entry name" value="Flu_NP"/>
</dbReference>
<dbReference type="Pfam" id="PF00506">
    <property type="entry name" value="Flu_NP"/>
    <property type="match status" value="1"/>
</dbReference>
<dbReference type="SUPFAM" id="SSF161003">
    <property type="entry name" value="flu NP-like"/>
    <property type="match status" value="1"/>
</dbReference>
<feature type="chain" id="PRO_0000079102" description="Nucleoprotein">
    <location>
        <begin position="1"/>
        <end position="498"/>
    </location>
</feature>
<feature type="region of interest" description="Disordered" evidence="2">
    <location>
        <begin position="1"/>
        <end position="21"/>
    </location>
</feature>
<feature type="short sequence motif" description="Unconventional nuclear localization signal" evidence="1">
    <location>
        <begin position="1"/>
        <end position="18"/>
    </location>
</feature>
<feature type="short sequence motif" description="Bipartite nuclear localization signal" evidence="1">
    <location>
        <begin position="198"/>
        <end position="216"/>
    </location>
</feature>
<sequence>MASQGTKRSYEQMETGGERQNATEIRASVGRMVGGIGRFYIQMCTELKLSDYEGRLIQNSITIERMVLSAFDERRNKYLEEHPSAGKDPKKTGGPIYRRRDGKWVRELILYDKEEIRRIWRQANNGEDATAGLTHLMIWHSNLNDATYQRTRALVRTGMDPRMCSLMQGSTLPRRSGAAGAAVKGVGTMVMELIRMIKRGINDRNFWRGENGRRTRIAYERMCNILKGKFQTAAQRAMMDQVRESRNPGNAEIEDLIFLARSALILRGSVAHKSCLPACVYGLAVASGYDFEREGYSLVGIDPFRLLQNSQVFSLIRPNENPAHKSQLVWMACHSAAFEDLRVSSFIRGTRVVPRGQLSTRGVQIASNENMETMDSSTLELRSRYWAIRTRSGGNTNQQRASAGQISVQPTFSVQRNLPFERATIMAAFTGNTEGRTSDMRTEIIRMMENARPEDVSFQGRGVFELSDEKATNPIVPSFDMSNEGSYFFGDNAEEYDN</sequence>
<proteinExistence type="inferred from homology"/>
<keyword id="KW-0167">Capsid protein</keyword>
<keyword id="KW-1139">Helical capsid protein</keyword>
<keyword id="KW-1048">Host nucleus</keyword>
<keyword id="KW-0945">Host-virus interaction</keyword>
<keyword id="KW-0687">Ribonucleoprotein</keyword>
<keyword id="KW-0694">RNA-binding</keyword>
<keyword id="KW-0543">Viral nucleoprotein</keyword>
<keyword id="KW-1163">Viral penetration into host nucleus</keyword>
<keyword id="KW-0946">Virion</keyword>
<keyword id="KW-1160">Virus entry into host cell</keyword>
<evidence type="ECO:0000255" key="1">
    <source>
        <dbReference type="HAMAP-Rule" id="MF_04070"/>
    </source>
</evidence>
<evidence type="ECO:0000256" key="2">
    <source>
        <dbReference type="SAM" id="MobiDB-lite"/>
    </source>
</evidence>
<protein>
    <recommendedName>
        <fullName evidence="1">Nucleoprotein</fullName>
    </recommendedName>
    <alternativeName>
        <fullName evidence="1">Nucleocapsid protein</fullName>
        <shortName evidence="1">Protein N</shortName>
    </alternativeName>
</protein>
<accession>P68882</accession>
<accession>P15680</accession>
<accession>Q20NN9</accession>
<gene>
    <name evidence="1" type="primary">NP</name>
</gene>
<comment type="function">
    <text evidence="1">Encapsidates the negative strand viral RNA, protecting it from nucleases. The encapsidated genomic RNA is termed the ribonucleoprotein (RNP) and serves as template for transcription and replication. The RNP needs to be localized in the host nucleus to start an infectious cycle, but is too large to diffuse through the nuclear pore complex. NP comprises at least 2 nuclear localization signals that are responsible for the active RNP import into the nucleus through cellular importin alpha/beta pathway. Later in the infection, nclear export of RNPs are mediated through viral proteins NEP interacting with M1 which binds nucleoproteins. It is possible that nucleoprotein binds directly host exportin-1/XPO1 and plays an active role in RNPs nuclear export. M1 interaction with RNP seems to hide nucleoprotein's nuclear localization signals. Soon after a virion infects a new cell, M1 dissociates from the RNP under acidification of the virion driven by M2 protein. Dissociation of M1 from RNP unmasks nucleoprotein's nuclear localization signals, targeting the RNP to the nucleus.</text>
</comment>
<comment type="subunit">
    <text evidence="1">Homomultimerizes to form the nucleocapsid. May bind host exportin-1/XPO1. Binds to viral genomic RNA. Protein-RNA contacts are mediated by a combination of electrostatic interactions between positively charged residues and the phosphate backbone and planar interactions between aromatic side chains and bases.</text>
</comment>
<comment type="subcellular location">
    <subcellularLocation>
        <location evidence="1">Virion</location>
    </subcellularLocation>
    <subcellularLocation>
        <location evidence="1">Host nucleus</location>
    </subcellularLocation>
</comment>
<comment type="PTM">
    <text evidence="1">Late in virus-infected cells, may be cleaved from a 56-kDa protein to a 53-kDa protein by a cellular caspase. This cleavage might be a marker for the onset of apoptosis in infected cells or have a specific function in virus host interaction.</text>
</comment>
<comment type="similarity">
    <text evidence="1">Belongs to the influenza viruses nucleoprotein family.</text>
</comment>
<name>NCAP_I80A8</name>
<organismHost>
    <name type="scientific">Aves</name>
    <dbReference type="NCBI Taxonomy" id="8782"/>
</organismHost>
<organism>
    <name type="scientific">Influenza A virus (strain A/Turkey/Minnesota/833/1980 H4N2)</name>
    <dbReference type="NCBI Taxonomy" id="383603"/>
    <lineage>
        <taxon>Viruses</taxon>
        <taxon>Riboviria</taxon>
        <taxon>Orthornavirae</taxon>
        <taxon>Negarnaviricota</taxon>
        <taxon>Polyploviricotina</taxon>
        <taxon>Insthoviricetes</taxon>
        <taxon>Articulavirales</taxon>
        <taxon>Orthomyxoviridae</taxon>
        <taxon>Alphainfluenzavirus</taxon>
        <taxon>Alphainfluenzavirus influenzae</taxon>
        <taxon>Influenza A virus</taxon>
    </lineage>
</organism>